<organism>
    <name type="scientific">Arabidopsis thaliana</name>
    <name type="common">Mouse-ear cress</name>
    <dbReference type="NCBI Taxonomy" id="3702"/>
    <lineage>
        <taxon>Eukaryota</taxon>
        <taxon>Viridiplantae</taxon>
        <taxon>Streptophyta</taxon>
        <taxon>Embryophyta</taxon>
        <taxon>Tracheophyta</taxon>
        <taxon>Spermatophyta</taxon>
        <taxon>Magnoliopsida</taxon>
        <taxon>eudicotyledons</taxon>
        <taxon>Gunneridae</taxon>
        <taxon>Pentapetalae</taxon>
        <taxon>rosids</taxon>
        <taxon>malvids</taxon>
        <taxon>Brassicales</taxon>
        <taxon>Brassicaceae</taxon>
        <taxon>Camelineae</taxon>
        <taxon>Arabidopsis</taxon>
    </lineage>
</organism>
<keyword id="KW-1003">Cell membrane</keyword>
<keyword id="KW-0472">Membrane</keyword>
<keyword id="KW-0496">Mitochondrion</keyword>
<keyword id="KW-0500">Molybdenum</keyword>
<keyword id="KW-1185">Reference proteome</keyword>
<keyword id="KW-0812">Transmembrane</keyword>
<keyword id="KW-1133">Transmembrane helix</keyword>
<keyword id="KW-0813">Transport</keyword>
<comment type="function">
    <text evidence="2 3 4 5">High affinity molybdate transporter. Unable to transport sulfate.</text>
</comment>
<comment type="activity regulation">
    <text evidence="2">Not inhibited by sulfate.</text>
</comment>
<comment type="biophysicochemical properties">
    <kinetics>
        <KM evidence="2">21 nM for molybdate</KM>
    </kinetics>
</comment>
<comment type="subcellular location">
    <subcellularLocation>
        <location>Cell membrane</location>
        <topology>Multi-pass membrane protein</topology>
    </subcellularLocation>
    <subcellularLocation>
        <location evidence="6">Endomembrane system</location>
        <topology evidence="6">Multi-pass membrane protein</topology>
    </subcellularLocation>
    <subcellularLocation>
        <location>Mitochondrion membrane</location>
        <topology>Multi-pass membrane protein</topology>
    </subcellularLocation>
    <text evidence="2 3">(PubMed:18454190) shows a localization in the mitochondrial membrane while (PubMed:18003916) shows a plasma membrane and endomembrane system localization.</text>
</comment>
<comment type="tissue specificity">
    <text evidence="2 3">Strongly expressed in roots. Detected in the vascular tissues of hypocotyls, in petioles and vascular tissues of cotyledons and leaves, in mesophyll cells, stamen, sepals and siliques.</text>
</comment>
<comment type="developmental stage">
    <text evidence="5">Not regulated during leaf senescence.</text>
</comment>
<comment type="disruption phenotype">
    <text evidence="2 4 5">90% and 80% reduction in molybdate content in shoots and roots respectively. Reduced growth of roots and shoots under conditions of limited molybdate supply. 9-fold reduction in molybdate content in leaf vacuoles. Decreased nitrate reductase activity due to a reduced molybdate uptake.</text>
</comment>
<comment type="miscellaneous">
    <text>The amino-acid substitution Asp-429 to Val observed in cv. Landsberg erecta may decrease the molybdate transport activity. A 54-bp deletion in the promoter of MOT1 is strongly associated with the decreased expression of the gene and the resulting low molybdate content observed in several cultivars.</text>
</comment>
<comment type="similarity">
    <text evidence="6">Belongs to the SLC26A/SulP transporter (TC 2.A.53) family.</text>
</comment>
<accession>Q9SL95</accession>
<reference key="1">
    <citation type="journal article" date="1999" name="Nature">
        <title>Sequence and analysis of chromosome 2 of the plant Arabidopsis thaliana.</title>
        <authorList>
            <person name="Lin X."/>
            <person name="Kaul S."/>
            <person name="Rounsley S.D."/>
            <person name="Shea T.P."/>
            <person name="Benito M.-I."/>
            <person name="Town C.D."/>
            <person name="Fujii C.Y."/>
            <person name="Mason T.M."/>
            <person name="Bowman C.L."/>
            <person name="Barnstead M.E."/>
            <person name="Feldblyum T.V."/>
            <person name="Buell C.R."/>
            <person name="Ketchum K.A."/>
            <person name="Lee J.J."/>
            <person name="Ronning C.M."/>
            <person name="Koo H.L."/>
            <person name="Moffat K.S."/>
            <person name="Cronin L.A."/>
            <person name="Shen M."/>
            <person name="Pai G."/>
            <person name="Van Aken S."/>
            <person name="Umayam L."/>
            <person name="Tallon L.J."/>
            <person name="Gill J.E."/>
            <person name="Adams M.D."/>
            <person name="Carrera A.J."/>
            <person name="Creasy T.H."/>
            <person name="Goodman H.M."/>
            <person name="Somerville C.R."/>
            <person name="Copenhaver G.P."/>
            <person name="Preuss D."/>
            <person name="Nierman W.C."/>
            <person name="White O."/>
            <person name="Eisen J.A."/>
            <person name="Salzberg S.L."/>
            <person name="Fraser C.M."/>
            <person name="Venter J.C."/>
        </authorList>
    </citation>
    <scope>NUCLEOTIDE SEQUENCE [LARGE SCALE GENOMIC DNA]</scope>
    <source>
        <strain>cv. Columbia</strain>
    </source>
</reference>
<reference key="2">
    <citation type="journal article" date="2017" name="Plant J.">
        <title>Araport11: a complete reannotation of the Arabidopsis thaliana reference genome.</title>
        <authorList>
            <person name="Cheng C.Y."/>
            <person name="Krishnakumar V."/>
            <person name="Chan A.P."/>
            <person name="Thibaud-Nissen F."/>
            <person name="Schobel S."/>
            <person name="Town C.D."/>
        </authorList>
    </citation>
    <scope>GENOME REANNOTATION</scope>
    <source>
        <strain>cv. Columbia</strain>
    </source>
</reference>
<reference key="3">
    <citation type="submission" date="2005-03" db="EMBL/GenBank/DDBJ databases">
        <title>Large-scale analysis of RIKEN Arabidopsis full-length (RAFL) cDNAs.</title>
        <authorList>
            <person name="Totoki Y."/>
            <person name="Seki M."/>
            <person name="Ishida J."/>
            <person name="Nakajima M."/>
            <person name="Enju A."/>
            <person name="Kamiya A."/>
            <person name="Narusaka M."/>
            <person name="Shin-i T."/>
            <person name="Nakagawa M."/>
            <person name="Sakamoto N."/>
            <person name="Oishi K."/>
            <person name="Kohara Y."/>
            <person name="Kobayashi M."/>
            <person name="Toyoda A."/>
            <person name="Sakaki Y."/>
            <person name="Sakurai T."/>
            <person name="Iida K."/>
            <person name="Akiyama K."/>
            <person name="Satou M."/>
            <person name="Toyoda T."/>
            <person name="Konagaya A."/>
            <person name="Carninci P."/>
            <person name="Kawai J."/>
            <person name="Hayashizaki Y."/>
            <person name="Shinozaki K."/>
        </authorList>
    </citation>
    <scope>NUCLEOTIDE SEQUENCE [LARGE SCALE MRNA]</scope>
    <source>
        <strain>cv. Columbia</strain>
    </source>
</reference>
<reference key="4">
    <citation type="journal article" date="2007" name="Proc. Natl. Acad. Sci. U.S.A.">
        <title>An Arabidopsis thaliana high-affinity molybdate transporter required for efficient uptake of molybdate from soil.</title>
        <authorList>
            <person name="Tomatsu H."/>
            <person name="Takano J."/>
            <person name="Takahashi H."/>
            <person name="Watanabe-Takahashi A."/>
            <person name="Shibagaki N."/>
            <person name="Fujiwara T."/>
        </authorList>
    </citation>
    <scope>FUNCTION</scope>
    <scope>DISRUPTION PHENOTYPE</scope>
    <scope>TISSUE SPECIFICITY</scope>
    <scope>SUBCELLULAR LOCATION</scope>
    <scope>ACTIVITY REGULATION</scope>
    <scope>BIOPHYSICOCHEMICAL PROPERTIES</scope>
    <source>
        <strain>cv. Columbia</strain>
        <strain>cv. Landsberg erecta</strain>
    </source>
</reference>
<reference key="5">
    <citation type="journal article" date="2008" name="PLoS Genet.">
        <title>Variation in molybdenum content across broadly distributed populations of Arabidopsis thaliana is controlled by a mitochondrial molybdenum transporter (MOT1).</title>
        <authorList>
            <person name="Baxter I."/>
            <person name="Muthukumar B."/>
            <person name="Park H.C."/>
            <person name="Buchner P."/>
            <person name="Lahner B."/>
            <person name="Danku J."/>
            <person name="Zhao K."/>
            <person name="Lee J."/>
            <person name="Hawkesford M.J."/>
            <person name="Guerinot M.L."/>
            <person name="Salt D.E."/>
        </authorList>
    </citation>
    <scope>FUNCTION</scope>
    <scope>SUBCELLULAR LOCATION</scope>
    <scope>TISSUE SPECIFICITY</scope>
</reference>
<reference key="6">
    <citation type="journal article" date="2011" name="J. Exp. Bot.">
        <title>Effects of molybdenum deficiency and defects in molybdate transporter MOT1 on transcript accumulation and nitrogen/sulphur metabolism in Arabidopsis thaliana.</title>
        <authorList>
            <person name="Ide Y."/>
            <person name="Kusano M."/>
            <person name="Oikawa A."/>
            <person name="Fukushima A."/>
            <person name="Tomatsu H."/>
            <person name="Saito K."/>
            <person name="Hirai M.Y."/>
            <person name="Fujiwara T."/>
        </authorList>
    </citation>
    <scope>FUNCTION</scope>
    <scope>DISRUPTION PHENOTYPE</scope>
    <source>
        <strain>cv. Columbia</strain>
    </source>
</reference>
<reference key="7">
    <citation type="journal article" date="2011" name="Plant Biol.">
        <title>Identification of an Arabidopsis solute carrier critical for intracellular transport and inter-organ allocation of molybdate.</title>
        <authorList>
            <person name="Gasber A."/>
            <person name="Klaumann S."/>
            <person name="Trentmann O."/>
            <person name="Trampczynska A."/>
            <person name="Clemens S."/>
            <person name="Schneider S."/>
            <person name="Sauer N."/>
            <person name="Feifer I."/>
            <person name="Bittner F."/>
            <person name="Mendel R.R."/>
            <person name="Neuhaus H.E."/>
        </authorList>
    </citation>
    <scope>FUNCTION</scope>
    <scope>DEVELOPMENTAL STAGE</scope>
    <scope>DISRUPTION PHENOTYPE</scope>
</reference>
<evidence type="ECO:0000255" key="1"/>
<evidence type="ECO:0000269" key="2">
    <source>
    </source>
</evidence>
<evidence type="ECO:0000269" key="3">
    <source>
    </source>
</evidence>
<evidence type="ECO:0000269" key="4">
    <source>
    </source>
</evidence>
<evidence type="ECO:0000269" key="5">
    <source>
    </source>
</evidence>
<evidence type="ECO:0000305" key="6"/>
<protein>
    <recommendedName>
        <fullName>Molybdate transporter 1</fullName>
    </recommendedName>
    <alternativeName>
        <fullName>Sulfate transporter like protein 5.2</fullName>
    </alternativeName>
</protein>
<proteinExistence type="evidence at protein level"/>
<dbReference type="EMBL" id="AC006053">
    <property type="protein sequence ID" value="AAD31368.1"/>
    <property type="molecule type" value="Genomic_DNA"/>
</dbReference>
<dbReference type="EMBL" id="CP002685">
    <property type="protein sequence ID" value="AEC07734.1"/>
    <property type="molecule type" value="Genomic_DNA"/>
</dbReference>
<dbReference type="EMBL" id="AK221594">
    <property type="protein sequence ID" value="BAD95122.1"/>
    <property type="molecule type" value="mRNA"/>
</dbReference>
<dbReference type="PIR" id="D84651">
    <property type="entry name" value="D84651"/>
</dbReference>
<dbReference type="RefSeq" id="NP_180139.1">
    <property type="nucleotide sequence ID" value="NM_128127.4"/>
</dbReference>
<dbReference type="SMR" id="Q9SL95"/>
<dbReference type="STRING" id="3702.Q9SL95"/>
<dbReference type="TCDB" id="2.A.53.5.1">
    <property type="family name" value="the sulfate permease (sulp) family"/>
</dbReference>
<dbReference type="PaxDb" id="3702-AT2G25680.1"/>
<dbReference type="ProteomicsDB" id="250882"/>
<dbReference type="EnsemblPlants" id="AT2G25680.1">
    <property type="protein sequence ID" value="AT2G25680.1"/>
    <property type="gene ID" value="AT2G25680"/>
</dbReference>
<dbReference type="GeneID" id="817109"/>
<dbReference type="Gramene" id="AT2G25680.1">
    <property type="protein sequence ID" value="AT2G25680.1"/>
    <property type="gene ID" value="AT2G25680"/>
</dbReference>
<dbReference type="KEGG" id="ath:AT2G25680"/>
<dbReference type="Araport" id="AT2G25680"/>
<dbReference type="TAIR" id="AT2G25680">
    <property type="gene designation" value="MOT1"/>
</dbReference>
<dbReference type="eggNOG" id="ENOG502QRGR">
    <property type="taxonomic scope" value="Eukaryota"/>
</dbReference>
<dbReference type="HOGENOM" id="CLU_032158_0_1_1"/>
<dbReference type="InParanoid" id="Q9SL95"/>
<dbReference type="OMA" id="FRSVWGE"/>
<dbReference type="PhylomeDB" id="Q9SL95"/>
<dbReference type="PRO" id="PR:Q9SL95"/>
<dbReference type="Proteomes" id="UP000006548">
    <property type="component" value="Chromosome 2"/>
</dbReference>
<dbReference type="ExpressionAtlas" id="Q9SL95">
    <property type="expression patterns" value="baseline and differential"/>
</dbReference>
<dbReference type="GO" id="GO:0031966">
    <property type="term" value="C:mitochondrial membrane"/>
    <property type="evidence" value="ECO:0007669"/>
    <property type="project" value="UniProtKB-SubCell"/>
</dbReference>
<dbReference type="GO" id="GO:0005739">
    <property type="term" value="C:mitochondrion"/>
    <property type="evidence" value="ECO:0000314"/>
    <property type="project" value="TAIR"/>
</dbReference>
<dbReference type="GO" id="GO:0000325">
    <property type="term" value="C:plant-type vacuole"/>
    <property type="evidence" value="ECO:0007005"/>
    <property type="project" value="TAIR"/>
</dbReference>
<dbReference type="GO" id="GO:0015098">
    <property type="term" value="F:molybdate ion transmembrane transporter activity"/>
    <property type="evidence" value="ECO:0000314"/>
    <property type="project" value="TAIR"/>
</dbReference>
<dbReference type="GO" id="GO:0015689">
    <property type="term" value="P:molybdate ion transport"/>
    <property type="evidence" value="ECO:0000314"/>
    <property type="project" value="TAIR"/>
</dbReference>
<dbReference type="InterPro" id="IPR031563">
    <property type="entry name" value="MOT1/MOT2"/>
</dbReference>
<dbReference type="PANTHER" id="PTHR31970">
    <property type="match status" value="1"/>
</dbReference>
<dbReference type="PANTHER" id="PTHR31970:SF0">
    <property type="entry name" value="MOLYBDATE TRANSPORTER 1"/>
    <property type="match status" value="1"/>
</dbReference>
<dbReference type="Pfam" id="PF16983">
    <property type="entry name" value="MFS_MOT1"/>
    <property type="match status" value="2"/>
</dbReference>
<gene>
    <name type="primary">MOT1</name>
    <name type="synonym">ST5.2</name>
    <name type="synonym">SULTR5.2</name>
    <name type="ordered locus">At2g25680</name>
    <name type="ORF">F3N11.13</name>
</gene>
<sequence length="456" mass="48391">MESQSQRGQHETPKRSRFTGMFHKLKTNLVFRSKLAEINGAMGDLGTYIPIVLALTLAKDLDLGTTLIFTGIYNAITGAVYGVPMPVQPMKSIAAVAISSTAEDFGIPEIMAAGICTGGILFVLGISGLMQLVFNIIPLSVVRGIQLSQGLAFAMSAVKYIRKEQNFSKSKSVGDRPWLGLDGLVLALVCVLFIVLVNGDGEEEEEEEEGDGSRGRGRWGSVRKVIANVPSALLIFLLGVVLAFIRKPSIVHDIKFGPSKMKIVRISRKAWRNGFLKGTVPQLPLSVLNSVVAVCKLSYDLFPEKEFSAASVSMTVGLMNMVGCWFGAMPTCHGAGGLAGQYKFGGRSGGCVALLGVAKLVLGLVLGGSLVGILEKFPVGVLGALLLFAGVELAMAARDMNTKGDAFVMLMCTSVSLGSNAAIGFVAGDLLYVVLWMRNYGRAKPSSLPPQSGEHA</sequence>
<feature type="chain" id="PRO_0000417396" description="Molybdate transporter 1">
    <location>
        <begin position="1"/>
        <end position="456"/>
    </location>
</feature>
<feature type="transmembrane region" description="Helical" evidence="1">
    <location>
        <begin position="67"/>
        <end position="87"/>
    </location>
</feature>
<feature type="transmembrane region" description="Helical" evidence="1">
    <location>
        <begin position="110"/>
        <end position="130"/>
    </location>
</feature>
<feature type="transmembrane region" description="Helical" evidence="1">
    <location>
        <begin position="133"/>
        <end position="153"/>
    </location>
</feature>
<feature type="transmembrane region" description="Helical" evidence="1">
    <location>
        <begin position="177"/>
        <end position="197"/>
    </location>
</feature>
<feature type="transmembrane region" description="Helical" evidence="1">
    <location>
        <begin position="225"/>
        <end position="245"/>
    </location>
</feature>
<feature type="transmembrane region" description="Helical" evidence="1">
    <location>
        <begin position="309"/>
        <end position="329"/>
    </location>
</feature>
<feature type="transmembrane region" description="Helical" evidence="1">
    <location>
        <begin position="354"/>
        <end position="374"/>
    </location>
</feature>
<feature type="transmembrane region" description="Helical" evidence="1">
    <location>
        <begin position="377"/>
        <end position="397"/>
    </location>
</feature>
<feature type="transmembrane region" description="Helical" evidence="1">
    <location>
        <begin position="417"/>
        <end position="437"/>
    </location>
</feature>
<feature type="sequence variant" description="In strain: cv. Landsberg erecta.">
    <original>D</original>
    <variation>V</variation>
    <location>
        <position position="429"/>
    </location>
</feature>
<name>MOT1_ARATH</name>